<sequence>MSYVIDRRLNGKNKSTVNRQRFLRRYREHIKKAVEEAVSRRSITDMEHGEQISIPGRDIDEPVLHHGRGGKQTIVHPGNKEFTAGERIPRPQGGGGGRGSGKASNSGEGMDEFVFQITQEEFLDFMFEDLELPNLVKRHLTGADTFKTVRAGISNEGNPSRINIIRTLRSAHARRIALSGSSRAKLREAKAELLRLRTEEPDNFSDIQEIEAEIERLSARIHRVPFLDTFDLKYNLLTKQPNPSSKAVMFCLMDVSGSMTQATKDIAKRFFILLYLFLKRNYDKIEVVFIRHHTSAKEVDEEEFFYSRETGGTIVSSALKLMQEIMAERYPINEWNIYAAQASDGDNWNDDSPVCRDILINQIMPFVQYFTYVEITPREHQALWFEYEQVAEAFDESFAQQQLVSAADIYPVFRELFQRRLVS</sequence>
<comment type="similarity">
    <text evidence="1">Belongs to the UPF0229 family.</text>
</comment>
<proteinExistence type="inferred from homology"/>
<organism>
    <name type="scientific">Ectopseudomonas mendocina (strain ymp)</name>
    <name type="common">Pseudomonas mendocina</name>
    <dbReference type="NCBI Taxonomy" id="399739"/>
    <lineage>
        <taxon>Bacteria</taxon>
        <taxon>Pseudomonadati</taxon>
        <taxon>Pseudomonadota</taxon>
        <taxon>Gammaproteobacteria</taxon>
        <taxon>Pseudomonadales</taxon>
        <taxon>Pseudomonadaceae</taxon>
        <taxon>Ectopseudomonas</taxon>
    </lineage>
</organism>
<dbReference type="EMBL" id="CP000680">
    <property type="protein sequence ID" value="ABP86765.1"/>
    <property type="molecule type" value="Genomic_DNA"/>
</dbReference>
<dbReference type="SMR" id="A4XZJ9"/>
<dbReference type="STRING" id="399739.Pmen_4018"/>
<dbReference type="KEGG" id="pmy:Pmen_4018"/>
<dbReference type="PATRIC" id="fig|399739.8.peg.4071"/>
<dbReference type="eggNOG" id="COG2718">
    <property type="taxonomic scope" value="Bacteria"/>
</dbReference>
<dbReference type="HOGENOM" id="CLU_049702_0_0_6"/>
<dbReference type="OrthoDB" id="9788289at2"/>
<dbReference type="HAMAP" id="MF_01232">
    <property type="entry name" value="UPF0229"/>
    <property type="match status" value="1"/>
</dbReference>
<dbReference type="InterPro" id="IPR006698">
    <property type="entry name" value="UPF0229"/>
</dbReference>
<dbReference type="NCBIfam" id="NF003707">
    <property type="entry name" value="PRK05325.1-2"/>
    <property type="match status" value="1"/>
</dbReference>
<dbReference type="NCBIfam" id="NF003708">
    <property type="entry name" value="PRK05325.1-3"/>
    <property type="match status" value="1"/>
</dbReference>
<dbReference type="PANTHER" id="PTHR30510">
    <property type="entry name" value="UPF0229 PROTEIN YEAH"/>
    <property type="match status" value="1"/>
</dbReference>
<dbReference type="PANTHER" id="PTHR30510:SF2">
    <property type="entry name" value="UPF0229 PROTEIN YEAH"/>
    <property type="match status" value="1"/>
</dbReference>
<dbReference type="Pfam" id="PF04285">
    <property type="entry name" value="DUF444"/>
    <property type="match status" value="1"/>
</dbReference>
<feature type="chain" id="PRO_1000066872" description="UPF0229 protein Pmen_4018">
    <location>
        <begin position="1"/>
        <end position="423"/>
    </location>
</feature>
<feature type="region of interest" description="Disordered" evidence="2">
    <location>
        <begin position="65"/>
        <end position="108"/>
    </location>
</feature>
<accession>A4XZJ9</accession>
<reference key="1">
    <citation type="submission" date="2007-04" db="EMBL/GenBank/DDBJ databases">
        <title>Complete sequence of Pseudomonas mendocina ymp.</title>
        <authorList>
            <consortium name="US DOE Joint Genome Institute"/>
            <person name="Copeland A."/>
            <person name="Lucas S."/>
            <person name="Lapidus A."/>
            <person name="Barry K."/>
            <person name="Glavina del Rio T."/>
            <person name="Dalin E."/>
            <person name="Tice H."/>
            <person name="Pitluck S."/>
            <person name="Kiss H."/>
            <person name="Brettin T."/>
            <person name="Detter J.C."/>
            <person name="Bruce D."/>
            <person name="Han C."/>
            <person name="Schmutz J."/>
            <person name="Larimer F."/>
            <person name="Land M."/>
            <person name="Hauser L."/>
            <person name="Kyrpides N."/>
            <person name="Mikhailova N."/>
            <person name="Hersman L."/>
            <person name="Dubois J."/>
            <person name="Maurice P."/>
            <person name="Richardson P."/>
        </authorList>
    </citation>
    <scope>NUCLEOTIDE SEQUENCE [LARGE SCALE GENOMIC DNA]</scope>
    <source>
        <strain>ymp</strain>
    </source>
</reference>
<protein>
    <recommendedName>
        <fullName evidence="1">UPF0229 protein Pmen_4018</fullName>
    </recommendedName>
</protein>
<evidence type="ECO:0000255" key="1">
    <source>
        <dbReference type="HAMAP-Rule" id="MF_01232"/>
    </source>
</evidence>
<evidence type="ECO:0000256" key="2">
    <source>
        <dbReference type="SAM" id="MobiDB-lite"/>
    </source>
</evidence>
<name>Y4018_ECTM1</name>
<gene>
    <name type="ordered locus">Pmen_4018</name>
</gene>